<protein>
    <recommendedName>
        <fullName evidence="1">ATP synthase subunit delta</fullName>
    </recommendedName>
    <alternativeName>
        <fullName evidence="1">ATP synthase F(1) sector subunit delta</fullName>
    </alternativeName>
    <alternativeName>
        <fullName evidence="1">F-type ATPase subunit delta</fullName>
        <shortName evidence="1">F-ATPase subunit delta</shortName>
    </alternativeName>
</protein>
<accession>A9AJG1</accession>
<evidence type="ECO:0000255" key="1">
    <source>
        <dbReference type="HAMAP-Rule" id="MF_01416"/>
    </source>
</evidence>
<reference key="1">
    <citation type="submission" date="2007-10" db="EMBL/GenBank/DDBJ databases">
        <title>Complete sequence of chromosome 1 of Burkholderia multivorans ATCC 17616.</title>
        <authorList>
            <person name="Copeland A."/>
            <person name="Lucas S."/>
            <person name="Lapidus A."/>
            <person name="Barry K."/>
            <person name="Glavina del Rio T."/>
            <person name="Dalin E."/>
            <person name="Tice H."/>
            <person name="Pitluck S."/>
            <person name="Chain P."/>
            <person name="Malfatti S."/>
            <person name="Shin M."/>
            <person name="Vergez L."/>
            <person name="Schmutz J."/>
            <person name="Larimer F."/>
            <person name="Land M."/>
            <person name="Hauser L."/>
            <person name="Kyrpides N."/>
            <person name="Kim E."/>
            <person name="Tiedje J."/>
            <person name="Richardson P."/>
        </authorList>
    </citation>
    <scope>NUCLEOTIDE SEQUENCE [LARGE SCALE GENOMIC DNA]</scope>
    <source>
        <strain>ATCC 17616 / 249</strain>
    </source>
</reference>
<reference key="2">
    <citation type="submission" date="2007-04" db="EMBL/GenBank/DDBJ databases">
        <title>Complete genome sequence of Burkholderia multivorans ATCC 17616.</title>
        <authorList>
            <person name="Ohtsubo Y."/>
            <person name="Yamashita A."/>
            <person name="Kurokawa K."/>
            <person name="Takami H."/>
            <person name="Yuhara S."/>
            <person name="Nishiyama E."/>
            <person name="Endo R."/>
            <person name="Miyazaki R."/>
            <person name="Ono A."/>
            <person name="Yano K."/>
            <person name="Ito M."/>
            <person name="Sota M."/>
            <person name="Yuji N."/>
            <person name="Hattori M."/>
            <person name="Tsuda M."/>
        </authorList>
    </citation>
    <scope>NUCLEOTIDE SEQUENCE [LARGE SCALE GENOMIC DNA]</scope>
    <source>
        <strain>ATCC 17616 / 249</strain>
    </source>
</reference>
<keyword id="KW-0066">ATP synthesis</keyword>
<keyword id="KW-0997">Cell inner membrane</keyword>
<keyword id="KW-1003">Cell membrane</keyword>
<keyword id="KW-0139">CF(1)</keyword>
<keyword id="KW-0375">Hydrogen ion transport</keyword>
<keyword id="KW-0406">Ion transport</keyword>
<keyword id="KW-0472">Membrane</keyword>
<keyword id="KW-1185">Reference proteome</keyword>
<keyword id="KW-0813">Transport</keyword>
<gene>
    <name evidence="1" type="primary">atpH</name>
    <name type="ordered locus">Bmul_0103</name>
    <name type="ordered locus">BMULJ_03162</name>
</gene>
<proteinExistence type="inferred from homology"/>
<organism>
    <name type="scientific">Burkholderia multivorans (strain ATCC 17616 / 249)</name>
    <dbReference type="NCBI Taxonomy" id="395019"/>
    <lineage>
        <taxon>Bacteria</taxon>
        <taxon>Pseudomonadati</taxon>
        <taxon>Pseudomonadota</taxon>
        <taxon>Betaproteobacteria</taxon>
        <taxon>Burkholderiales</taxon>
        <taxon>Burkholderiaceae</taxon>
        <taxon>Burkholderia</taxon>
        <taxon>Burkholderia cepacia complex</taxon>
    </lineage>
</organism>
<name>ATPD_BURM1</name>
<comment type="function">
    <text evidence="1">F(1)F(0) ATP synthase produces ATP from ADP in the presence of a proton or sodium gradient. F-type ATPases consist of two structural domains, F(1) containing the extramembraneous catalytic core and F(0) containing the membrane proton channel, linked together by a central stalk and a peripheral stalk. During catalysis, ATP synthesis in the catalytic domain of F(1) is coupled via a rotary mechanism of the central stalk subunits to proton translocation.</text>
</comment>
<comment type="function">
    <text evidence="1">This protein is part of the stalk that links CF(0) to CF(1). It either transmits conformational changes from CF(0) to CF(1) or is implicated in proton conduction.</text>
</comment>
<comment type="subunit">
    <text evidence="1">F-type ATPases have 2 components, F(1) - the catalytic core - and F(0) - the membrane proton channel. F(1) has five subunits: alpha(3), beta(3), gamma(1), delta(1), epsilon(1). F(0) has three main subunits: a(1), b(2) and c(10-14). The alpha and beta chains form an alternating ring which encloses part of the gamma chain. F(1) is attached to F(0) by a central stalk formed by the gamma and epsilon chains, while a peripheral stalk is formed by the delta and b chains.</text>
</comment>
<comment type="subcellular location">
    <subcellularLocation>
        <location evidence="1">Cell inner membrane</location>
        <topology evidence="1">Peripheral membrane protein</topology>
    </subcellularLocation>
</comment>
<comment type="similarity">
    <text evidence="1">Belongs to the ATPase delta chain family.</text>
</comment>
<sequence length="179" mass="19004">MAELATIARPYAEALFRVAEGGDIAAWSTLVQELAQVARLPEVLSVASSPKVTRAQVAELLLAALKSPLAAGAEAKNFVQMLVDNHRIALLPEIAEQFEALKNEREGAADAEIVSAFPLDGADLDSLVASLERKFKRKLKPTVEVDSSLIGGVRVTVGDEVLDTSVRARLASMQAALTA</sequence>
<feature type="chain" id="PRO_1000184664" description="ATP synthase subunit delta">
    <location>
        <begin position="1"/>
        <end position="179"/>
    </location>
</feature>
<dbReference type="EMBL" id="CP000868">
    <property type="protein sequence ID" value="ABX13798.1"/>
    <property type="molecule type" value="Genomic_DNA"/>
</dbReference>
<dbReference type="EMBL" id="AP009385">
    <property type="protein sequence ID" value="BAG45036.1"/>
    <property type="molecule type" value="Genomic_DNA"/>
</dbReference>
<dbReference type="RefSeq" id="WP_006401465.1">
    <property type="nucleotide sequence ID" value="NC_010804.1"/>
</dbReference>
<dbReference type="SMR" id="A9AJG1"/>
<dbReference type="STRING" id="395019.BMULJ_03162"/>
<dbReference type="KEGG" id="bmj:BMULJ_03162"/>
<dbReference type="KEGG" id="bmu:Bmul_0103"/>
<dbReference type="eggNOG" id="COG0712">
    <property type="taxonomic scope" value="Bacteria"/>
</dbReference>
<dbReference type="HOGENOM" id="CLU_085114_3_0_4"/>
<dbReference type="Proteomes" id="UP000008815">
    <property type="component" value="Chromosome 1"/>
</dbReference>
<dbReference type="GO" id="GO:0005886">
    <property type="term" value="C:plasma membrane"/>
    <property type="evidence" value="ECO:0007669"/>
    <property type="project" value="UniProtKB-SubCell"/>
</dbReference>
<dbReference type="GO" id="GO:0045259">
    <property type="term" value="C:proton-transporting ATP synthase complex"/>
    <property type="evidence" value="ECO:0007669"/>
    <property type="project" value="UniProtKB-KW"/>
</dbReference>
<dbReference type="GO" id="GO:0046933">
    <property type="term" value="F:proton-transporting ATP synthase activity, rotational mechanism"/>
    <property type="evidence" value="ECO:0007669"/>
    <property type="project" value="UniProtKB-UniRule"/>
</dbReference>
<dbReference type="Gene3D" id="1.10.520.20">
    <property type="entry name" value="N-terminal domain of the delta subunit of the F1F0-ATP synthase"/>
    <property type="match status" value="1"/>
</dbReference>
<dbReference type="HAMAP" id="MF_01416">
    <property type="entry name" value="ATP_synth_delta_bact"/>
    <property type="match status" value="1"/>
</dbReference>
<dbReference type="InterPro" id="IPR026015">
    <property type="entry name" value="ATP_synth_OSCP/delta_N_sf"/>
</dbReference>
<dbReference type="InterPro" id="IPR000711">
    <property type="entry name" value="ATPase_OSCP/dsu"/>
</dbReference>
<dbReference type="NCBIfam" id="TIGR01145">
    <property type="entry name" value="ATP_synt_delta"/>
    <property type="match status" value="1"/>
</dbReference>
<dbReference type="NCBIfam" id="NF004402">
    <property type="entry name" value="PRK05758.2-2"/>
    <property type="match status" value="1"/>
</dbReference>
<dbReference type="PANTHER" id="PTHR11910">
    <property type="entry name" value="ATP SYNTHASE DELTA CHAIN"/>
    <property type="match status" value="1"/>
</dbReference>
<dbReference type="Pfam" id="PF00213">
    <property type="entry name" value="OSCP"/>
    <property type="match status" value="1"/>
</dbReference>
<dbReference type="PRINTS" id="PR00125">
    <property type="entry name" value="ATPASEDELTA"/>
</dbReference>
<dbReference type="SUPFAM" id="SSF47928">
    <property type="entry name" value="N-terminal domain of the delta subunit of the F1F0-ATP synthase"/>
    <property type="match status" value="1"/>
</dbReference>